<dbReference type="EC" id="2.7.4.9" evidence="1"/>
<dbReference type="EMBL" id="CP000679">
    <property type="protein sequence ID" value="ABP66359.1"/>
    <property type="molecule type" value="Genomic_DNA"/>
</dbReference>
<dbReference type="SMR" id="A4XHH4"/>
<dbReference type="STRING" id="351627.Csac_0740"/>
<dbReference type="KEGG" id="csc:Csac_0740"/>
<dbReference type="eggNOG" id="COG0125">
    <property type="taxonomic scope" value="Bacteria"/>
</dbReference>
<dbReference type="HOGENOM" id="CLU_049131_0_2_9"/>
<dbReference type="Proteomes" id="UP000000256">
    <property type="component" value="Chromosome"/>
</dbReference>
<dbReference type="GO" id="GO:0005829">
    <property type="term" value="C:cytosol"/>
    <property type="evidence" value="ECO:0007669"/>
    <property type="project" value="TreeGrafter"/>
</dbReference>
<dbReference type="GO" id="GO:0005524">
    <property type="term" value="F:ATP binding"/>
    <property type="evidence" value="ECO:0007669"/>
    <property type="project" value="UniProtKB-UniRule"/>
</dbReference>
<dbReference type="GO" id="GO:0004798">
    <property type="term" value="F:dTMP kinase activity"/>
    <property type="evidence" value="ECO:0007669"/>
    <property type="project" value="UniProtKB-UniRule"/>
</dbReference>
<dbReference type="GO" id="GO:0006233">
    <property type="term" value="P:dTDP biosynthetic process"/>
    <property type="evidence" value="ECO:0007669"/>
    <property type="project" value="InterPro"/>
</dbReference>
<dbReference type="GO" id="GO:0006235">
    <property type="term" value="P:dTTP biosynthetic process"/>
    <property type="evidence" value="ECO:0007669"/>
    <property type="project" value="UniProtKB-UniRule"/>
</dbReference>
<dbReference type="GO" id="GO:0006227">
    <property type="term" value="P:dUDP biosynthetic process"/>
    <property type="evidence" value="ECO:0007669"/>
    <property type="project" value="TreeGrafter"/>
</dbReference>
<dbReference type="CDD" id="cd01672">
    <property type="entry name" value="TMPK"/>
    <property type="match status" value="1"/>
</dbReference>
<dbReference type="FunFam" id="3.40.50.300:FF:000225">
    <property type="entry name" value="Thymidylate kinase"/>
    <property type="match status" value="1"/>
</dbReference>
<dbReference type="Gene3D" id="3.40.50.300">
    <property type="entry name" value="P-loop containing nucleotide triphosphate hydrolases"/>
    <property type="match status" value="1"/>
</dbReference>
<dbReference type="HAMAP" id="MF_00165">
    <property type="entry name" value="Thymidylate_kinase"/>
    <property type="match status" value="1"/>
</dbReference>
<dbReference type="InterPro" id="IPR027417">
    <property type="entry name" value="P-loop_NTPase"/>
</dbReference>
<dbReference type="InterPro" id="IPR039430">
    <property type="entry name" value="Thymidylate_kin-like_dom"/>
</dbReference>
<dbReference type="InterPro" id="IPR018095">
    <property type="entry name" value="Thymidylate_kin_CS"/>
</dbReference>
<dbReference type="InterPro" id="IPR018094">
    <property type="entry name" value="Thymidylate_kinase"/>
</dbReference>
<dbReference type="NCBIfam" id="TIGR00041">
    <property type="entry name" value="DTMP_kinase"/>
    <property type="match status" value="1"/>
</dbReference>
<dbReference type="PANTHER" id="PTHR10344">
    <property type="entry name" value="THYMIDYLATE KINASE"/>
    <property type="match status" value="1"/>
</dbReference>
<dbReference type="PANTHER" id="PTHR10344:SF4">
    <property type="entry name" value="UMP-CMP KINASE 2, MITOCHONDRIAL"/>
    <property type="match status" value="1"/>
</dbReference>
<dbReference type="Pfam" id="PF02223">
    <property type="entry name" value="Thymidylate_kin"/>
    <property type="match status" value="1"/>
</dbReference>
<dbReference type="SUPFAM" id="SSF52540">
    <property type="entry name" value="P-loop containing nucleoside triphosphate hydrolases"/>
    <property type="match status" value="1"/>
</dbReference>
<dbReference type="PROSITE" id="PS01331">
    <property type="entry name" value="THYMIDYLATE_KINASE"/>
    <property type="match status" value="1"/>
</dbReference>
<reference key="1">
    <citation type="submission" date="2007-04" db="EMBL/GenBank/DDBJ databases">
        <title>Genome sequence of the thermophilic hydrogen-producing bacterium Caldicellulosiruptor saccharolyticus DSM 8903.</title>
        <authorList>
            <person name="Copeland A."/>
            <person name="Lucas S."/>
            <person name="Lapidus A."/>
            <person name="Barry K."/>
            <person name="Detter J.C."/>
            <person name="Glavina del Rio T."/>
            <person name="Hammon N."/>
            <person name="Israni S."/>
            <person name="Dalin E."/>
            <person name="Tice H."/>
            <person name="Pitluck S."/>
            <person name="Kiss H."/>
            <person name="Brettin T."/>
            <person name="Bruce D."/>
            <person name="Han C."/>
            <person name="Schmutz J."/>
            <person name="Larimer F."/>
            <person name="Land M."/>
            <person name="Hauser L."/>
            <person name="Kyrpides N."/>
            <person name="Lykidis A."/>
            <person name="van de Werken H.J.G."/>
            <person name="Verhaart M.R.A."/>
            <person name="VanFossen A.L."/>
            <person name="Lewis D.L."/>
            <person name="Nichols J.D."/>
            <person name="Goorissen H.P."/>
            <person name="van Niel E.W.J."/>
            <person name="Stams F.J.M."/>
            <person name="Willquist K.U."/>
            <person name="Ward D.E."/>
            <person name="van der Oost J."/>
            <person name="Kelly R.M."/>
            <person name="Kengen S.M.W."/>
            <person name="Richardson P."/>
        </authorList>
    </citation>
    <scope>NUCLEOTIDE SEQUENCE [LARGE SCALE GENOMIC DNA]</scope>
    <source>
        <strain>ATCC 43494 / DSM 8903 / Tp8T 6331</strain>
    </source>
</reference>
<comment type="function">
    <text evidence="1">Phosphorylation of dTMP to form dTDP in both de novo and salvage pathways of dTTP synthesis.</text>
</comment>
<comment type="catalytic activity">
    <reaction evidence="1">
        <text>dTMP + ATP = dTDP + ADP</text>
        <dbReference type="Rhea" id="RHEA:13517"/>
        <dbReference type="ChEBI" id="CHEBI:30616"/>
        <dbReference type="ChEBI" id="CHEBI:58369"/>
        <dbReference type="ChEBI" id="CHEBI:63528"/>
        <dbReference type="ChEBI" id="CHEBI:456216"/>
        <dbReference type="EC" id="2.7.4.9"/>
    </reaction>
</comment>
<comment type="similarity">
    <text evidence="1">Belongs to the thymidylate kinase family.</text>
</comment>
<feature type="chain" id="PRO_1000203610" description="Thymidylate kinase">
    <location>
        <begin position="1"/>
        <end position="206"/>
    </location>
</feature>
<feature type="binding site" evidence="1">
    <location>
        <begin position="10"/>
        <end position="17"/>
    </location>
    <ligand>
        <name>ATP</name>
        <dbReference type="ChEBI" id="CHEBI:30616"/>
    </ligand>
</feature>
<sequence length="206" mass="23433">MKGKFIVFEGNDGSGKSTQILKVEKYLKEKGYKVVTTREPGGTEVGFRIRKLLLDPAYKMDGLTEALLLAADRNEHVKNVLIPALEDGYVVVCDRYILSSIVYQGIVRGVGVENIIKLNSIFEEKIKPDLYIILTLSPEIALQRLKMAGKNDKLDTENFDFHRKVYNGFKEVSKMFKKCVNIEAEGTVEDVFEKVRKVIDDLLKKR</sequence>
<accession>A4XHH4</accession>
<organism>
    <name type="scientific">Caldicellulosiruptor saccharolyticus (strain ATCC 43494 / DSM 8903 / Tp8T 6331)</name>
    <dbReference type="NCBI Taxonomy" id="351627"/>
    <lineage>
        <taxon>Bacteria</taxon>
        <taxon>Bacillati</taxon>
        <taxon>Bacillota</taxon>
        <taxon>Bacillota incertae sedis</taxon>
        <taxon>Caldicellulosiruptorales</taxon>
        <taxon>Caldicellulosiruptoraceae</taxon>
        <taxon>Caldicellulosiruptor</taxon>
    </lineage>
</organism>
<protein>
    <recommendedName>
        <fullName evidence="1">Thymidylate kinase</fullName>
        <ecNumber evidence="1">2.7.4.9</ecNumber>
    </recommendedName>
    <alternativeName>
        <fullName evidence="1">dTMP kinase</fullName>
    </alternativeName>
</protein>
<name>KTHY_CALS8</name>
<proteinExistence type="inferred from homology"/>
<keyword id="KW-0067">ATP-binding</keyword>
<keyword id="KW-0418">Kinase</keyword>
<keyword id="KW-0545">Nucleotide biosynthesis</keyword>
<keyword id="KW-0547">Nucleotide-binding</keyword>
<keyword id="KW-0808">Transferase</keyword>
<gene>
    <name evidence="1" type="primary">tmk</name>
    <name type="ordered locus">Csac_0740</name>
</gene>
<evidence type="ECO:0000255" key="1">
    <source>
        <dbReference type="HAMAP-Rule" id="MF_00165"/>
    </source>
</evidence>